<reference key="1">
    <citation type="journal article" date="2004" name="Proc. Natl. Acad. Sci. U.S.A.">
        <title>Insights into the evolution of Yersinia pestis through whole-genome comparison with Yersinia pseudotuberculosis.</title>
        <authorList>
            <person name="Chain P.S.G."/>
            <person name="Carniel E."/>
            <person name="Larimer F.W."/>
            <person name="Lamerdin J."/>
            <person name="Stoutland P.O."/>
            <person name="Regala W.M."/>
            <person name="Georgescu A.M."/>
            <person name="Vergez L.M."/>
            <person name="Land M.L."/>
            <person name="Motin V.L."/>
            <person name="Brubaker R.R."/>
            <person name="Fowler J."/>
            <person name="Hinnebusch J."/>
            <person name="Marceau M."/>
            <person name="Medigue C."/>
            <person name="Simonet M."/>
            <person name="Chenal-Francisque V."/>
            <person name="Souza B."/>
            <person name="Dacheux D."/>
            <person name="Elliott J.M."/>
            <person name="Derbise A."/>
            <person name="Hauser L.J."/>
            <person name="Garcia E."/>
        </authorList>
    </citation>
    <scope>NUCLEOTIDE SEQUENCE [LARGE SCALE GENOMIC DNA]</scope>
    <source>
        <strain>IP32953</strain>
    </source>
</reference>
<name>LPXH_YERPS</name>
<feature type="chain" id="PRO_1000025103" description="UDP-2,3-diacylglucosamine hydrolase">
    <location>
        <begin position="1"/>
        <end position="240"/>
    </location>
</feature>
<feature type="binding site" evidence="1">
    <location>
        <position position="8"/>
    </location>
    <ligand>
        <name>Mn(2+)</name>
        <dbReference type="ChEBI" id="CHEBI:29035"/>
        <label>1</label>
    </ligand>
</feature>
<feature type="binding site" evidence="1">
    <location>
        <position position="10"/>
    </location>
    <ligand>
        <name>Mn(2+)</name>
        <dbReference type="ChEBI" id="CHEBI:29035"/>
        <label>1</label>
    </ligand>
</feature>
<feature type="binding site" evidence="1">
    <location>
        <position position="41"/>
    </location>
    <ligand>
        <name>Mn(2+)</name>
        <dbReference type="ChEBI" id="CHEBI:29035"/>
        <label>1</label>
    </ligand>
</feature>
<feature type="binding site" evidence="1">
    <location>
        <position position="41"/>
    </location>
    <ligand>
        <name>Mn(2+)</name>
        <dbReference type="ChEBI" id="CHEBI:29035"/>
        <label>2</label>
    </ligand>
</feature>
<feature type="binding site" evidence="1">
    <location>
        <begin position="79"/>
        <end position="80"/>
    </location>
    <ligand>
        <name>substrate</name>
    </ligand>
</feature>
<feature type="binding site" evidence="1">
    <location>
        <position position="79"/>
    </location>
    <ligand>
        <name>Mn(2+)</name>
        <dbReference type="ChEBI" id="CHEBI:29035"/>
        <label>2</label>
    </ligand>
</feature>
<feature type="binding site" evidence="1">
    <location>
        <position position="114"/>
    </location>
    <ligand>
        <name>Mn(2+)</name>
        <dbReference type="ChEBI" id="CHEBI:29035"/>
        <label>2</label>
    </ligand>
</feature>
<feature type="binding site" evidence="1">
    <location>
        <position position="122"/>
    </location>
    <ligand>
        <name>substrate</name>
    </ligand>
</feature>
<feature type="binding site" evidence="1">
    <location>
        <position position="160"/>
    </location>
    <ligand>
        <name>substrate</name>
    </ligand>
</feature>
<feature type="binding site" evidence="1">
    <location>
        <position position="164"/>
    </location>
    <ligand>
        <name>substrate</name>
    </ligand>
</feature>
<feature type="binding site" evidence="1">
    <location>
        <position position="167"/>
    </location>
    <ligand>
        <name>substrate</name>
    </ligand>
</feature>
<feature type="binding site" evidence="1">
    <location>
        <position position="195"/>
    </location>
    <ligand>
        <name>Mn(2+)</name>
        <dbReference type="ChEBI" id="CHEBI:29035"/>
        <label>2</label>
    </ligand>
</feature>
<feature type="binding site" evidence="1">
    <location>
        <position position="195"/>
    </location>
    <ligand>
        <name>substrate</name>
    </ligand>
</feature>
<feature type="binding site" evidence="1">
    <location>
        <position position="197"/>
    </location>
    <ligand>
        <name>Mn(2+)</name>
        <dbReference type="ChEBI" id="CHEBI:29035"/>
        <label>1</label>
    </ligand>
</feature>
<proteinExistence type="inferred from homology"/>
<protein>
    <recommendedName>
        <fullName evidence="1">UDP-2,3-diacylglucosamine hydrolase</fullName>
        <ecNumber evidence="1">3.6.1.54</ecNumber>
    </recommendedName>
    <alternativeName>
        <fullName evidence="1">UDP-2,3-diacylglucosamine diphosphatase</fullName>
    </alternativeName>
</protein>
<organism>
    <name type="scientific">Yersinia pseudotuberculosis serotype I (strain IP32953)</name>
    <dbReference type="NCBI Taxonomy" id="273123"/>
    <lineage>
        <taxon>Bacteria</taxon>
        <taxon>Pseudomonadati</taxon>
        <taxon>Pseudomonadota</taxon>
        <taxon>Gammaproteobacteria</taxon>
        <taxon>Enterobacterales</taxon>
        <taxon>Yersiniaceae</taxon>
        <taxon>Yersinia</taxon>
    </lineage>
</organism>
<evidence type="ECO:0000255" key="1">
    <source>
        <dbReference type="HAMAP-Rule" id="MF_00575"/>
    </source>
</evidence>
<dbReference type="EC" id="3.6.1.54" evidence="1"/>
<dbReference type="EMBL" id="BX936398">
    <property type="protein sequence ID" value="CAH20273.1"/>
    <property type="molecule type" value="Genomic_DNA"/>
</dbReference>
<dbReference type="RefSeq" id="WP_002208568.1">
    <property type="nucleotide sequence ID" value="NZ_CP009712.1"/>
</dbReference>
<dbReference type="SMR" id="Q66DL1"/>
<dbReference type="KEGG" id="ypo:BZ17_1513"/>
<dbReference type="KEGG" id="yps:YPTB1033"/>
<dbReference type="PATRIC" id="fig|273123.14.peg.1606"/>
<dbReference type="UniPathway" id="UPA00359">
    <property type="reaction ID" value="UER00480"/>
</dbReference>
<dbReference type="Proteomes" id="UP000001011">
    <property type="component" value="Chromosome"/>
</dbReference>
<dbReference type="GO" id="GO:0005737">
    <property type="term" value="C:cytoplasm"/>
    <property type="evidence" value="ECO:0007669"/>
    <property type="project" value="InterPro"/>
</dbReference>
<dbReference type="GO" id="GO:0019897">
    <property type="term" value="C:extrinsic component of plasma membrane"/>
    <property type="evidence" value="ECO:0007669"/>
    <property type="project" value="UniProtKB-UniRule"/>
</dbReference>
<dbReference type="GO" id="GO:0030145">
    <property type="term" value="F:manganese ion binding"/>
    <property type="evidence" value="ECO:0007669"/>
    <property type="project" value="UniProtKB-UniRule"/>
</dbReference>
<dbReference type="GO" id="GO:0008758">
    <property type="term" value="F:UDP-2,3-diacylglucosamine hydrolase activity"/>
    <property type="evidence" value="ECO:0007669"/>
    <property type="project" value="UniProtKB-UniRule"/>
</dbReference>
<dbReference type="GO" id="GO:0009245">
    <property type="term" value="P:lipid A biosynthetic process"/>
    <property type="evidence" value="ECO:0007669"/>
    <property type="project" value="UniProtKB-UniRule"/>
</dbReference>
<dbReference type="CDD" id="cd07398">
    <property type="entry name" value="MPP_YbbF-LpxH"/>
    <property type="match status" value="1"/>
</dbReference>
<dbReference type="FunFam" id="3.60.21.10:FF:000074">
    <property type="entry name" value="UDP-2,3-diacylglucosamine hydrolase"/>
    <property type="match status" value="1"/>
</dbReference>
<dbReference type="Gene3D" id="3.60.21.10">
    <property type="match status" value="1"/>
</dbReference>
<dbReference type="HAMAP" id="MF_00575">
    <property type="entry name" value="LpxH"/>
    <property type="match status" value="1"/>
</dbReference>
<dbReference type="InterPro" id="IPR004843">
    <property type="entry name" value="Calcineurin-like_PHP_ApaH"/>
</dbReference>
<dbReference type="InterPro" id="IPR043461">
    <property type="entry name" value="LpxH-like"/>
</dbReference>
<dbReference type="InterPro" id="IPR029052">
    <property type="entry name" value="Metallo-depent_PP-like"/>
</dbReference>
<dbReference type="InterPro" id="IPR010138">
    <property type="entry name" value="UDP-diacylglucosamine_Hdrlase"/>
</dbReference>
<dbReference type="NCBIfam" id="TIGR01854">
    <property type="entry name" value="lipid_A_lpxH"/>
    <property type="match status" value="1"/>
</dbReference>
<dbReference type="NCBIfam" id="NF003743">
    <property type="entry name" value="PRK05340.1"/>
    <property type="match status" value="1"/>
</dbReference>
<dbReference type="PANTHER" id="PTHR34990:SF1">
    <property type="entry name" value="UDP-2,3-DIACYLGLUCOSAMINE HYDROLASE"/>
    <property type="match status" value="1"/>
</dbReference>
<dbReference type="PANTHER" id="PTHR34990">
    <property type="entry name" value="UDP-2,3-DIACYLGLUCOSAMINE HYDROLASE-RELATED"/>
    <property type="match status" value="1"/>
</dbReference>
<dbReference type="Pfam" id="PF00149">
    <property type="entry name" value="Metallophos"/>
    <property type="match status" value="1"/>
</dbReference>
<dbReference type="SUPFAM" id="SSF56300">
    <property type="entry name" value="Metallo-dependent phosphatases"/>
    <property type="match status" value="1"/>
</dbReference>
<gene>
    <name evidence="1" type="primary">lpxH</name>
    <name type="ordered locus">YPTB1033</name>
</gene>
<accession>Q66DL1</accession>
<sequence>MSTLFIADLHLSVQEPAITAGFLHFIQREAIHADALYILGDLFESWIGDDDPEPLYRQVAAALKSLQQQGVPCYFIHGNRDFLLGKRFAEESGMVLLPEENVVELYGRKILILHGDTLCTDDTDYQHFRKKVHNPLIQKLFLWIPLRLRLRIAAYMRNKSQQNNSGKSERIMDVNSKAVIDAFLRHDVSWMIHGHTHRPAIHSVELPMVTAHRVVLGAWHVEGSMVKVTADNVELITFPF</sequence>
<comment type="function">
    <text evidence="1">Hydrolyzes the pyrophosphate bond of UDP-2,3-diacylglucosamine to yield 2,3-diacylglucosamine 1-phosphate (lipid X) and UMP by catalyzing the attack of water at the alpha-P atom. Involved in the biosynthesis of lipid A, a phosphorylated glycolipid that anchors the lipopolysaccharide to the outer membrane of the cell.</text>
</comment>
<comment type="catalytic activity">
    <reaction evidence="1">
        <text>UDP-2-N,3-O-bis[(3R)-3-hydroxytetradecanoyl]-alpha-D-glucosamine + H2O = 2-N,3-O-bis[(3R)-3-hydroxytetradecanoyl]-alpha-D-glucosaminyl 1-phosphate + UMP + 2 H(+)</text>
        <dbReference type="Rhea" id="RHEA:25213"/>
        <dbReference type="ChEBI" id="CHEBI:15377"/>
        <dbReference type="ChEBI" id="CHEBI:15378"/>
        <dbReference type="ChEBI" id="CHEBI:57865"/>
        <dbReference type="ChEBI" id="CHEBI:57957"/>
        <dbReference type="ChEBI" id="CHEBI:78847"/>
        <dbReference type="EC" id="3.6.1.54"/>
    </reaction>
</comment>
<comment type="cofactor">
    <cofactor evidence="1">
        <name>Mn(2+)</name>
        <dbReference type="ChEBI" id="CHEBI:29035"/>
    </cofactor>
    <text evidence="1">Binds 2 Mn(2+) ions per subunit in a binuclear metal center.</text>
</comment>
<comment type="pathway">
    <text evidence="1">Glycolipid biosynthesis; lipid IV(A) biosynthesis; lipid IV(A) from (3R)-3-hydroxytetradecanoyl-[acyl-carrier-protein] and UDP-N-acetyl-alpha-D-glucosamine: step 4/6.</text>
</comment>
<comment type="subcellular location">
    <subcellularLocation>
        <location evidence="1">Cell inner membrane</location>
        <topology evidence="1">Peripheral membrane protein</topology>
        <orientation evidence="1">Cytoplasmic side</orientation>
    </subcellularLocation>
</comment>
<comment type="similarity">
    <text evidence="1">Belongs to the LpxH family.</text>
</comment>
<keyword id="KW-0997">Cell inner membrane</keyword>
<keyword id="KW-1003">Cell membrane</keyword>
<keyword id="KW-0378">Hydrolase</keyword>
<keyword id="KW-0441">Lipid A biosynthesis</keyword>
<keyword id="KW-0444">Lipid biosynthesis</keyword>
<keyword id="KW-0443">Lipid metabolism</keyword>
<keyword id="KW-0464">Manganese</keyword>
<keyword id="KW-0472">Membrane</keyword>
<keyword id="KW-0479">Metal-binding</keyword>